<protein>
    <recommendedName>
        <fullName evidence="1">Large ribosomal subunit protein bL21</fullName>
    </recommendedName>
    <alternativeName>
        <fullName evidence="2">50S ribosomal protein L21</fullName>
    </alternativeName>
</protein>
<evidence type="ECO:0000255" key="1">
    <source>
        <dbReference type="HAMAP-Rule" id="MF_01363"/>
    </source>
</evidence>
<evidence type="ECO:0000305" key="2"/>
<feature type="chain" id="PRO_1000067830" description="Large ribosomal subunit protein bL21">
    <location>
        <begin position="1"/>
        <end position="106"/>
    </location>
</feature>
<sequence>MFAVIETGGKQYKVKPGQRLRVESLAGEVGDKIAFDKVLLVAAGEEVSVGAPYVAGGSVQATIANHGRHKKVTIIKFRRRKHSMKRQGHRQNYTEIVIDTINGKTE</sequence>
<organism>
    <name type="scientific">Dichelobacter nodosus (strain VCS1703A)</name>
    <dbReference type="NCBI Taxonomy" id="246195"/>
    <lineage>
        <taxon>Bacteria</taxon>
        <taxon>Pseudomonadati</taxon>
        <taxon>Pseudomonadota</taxon>
        <taxon>Gammaproteobacteria</taxon>
        <taxon>Cardiobacteriales</taxon>
        <taxon>Cardiobacteriaceae</taxon>
        <taxon>Dichelobacter</taxon>
    </lineage>
</organism>
<gene>
    <name evidence="1" type="primary">rplU</name>
    <name type="ordered locus">DNO_0486</name>
</gene>
<accession>A5EVQ9</accession>
<proteinExistence type="inferred from homology"/>
<name>RL21_DICNV</name>
<comment type="function">
    <text evidence="1">This protein binds to 23S rRNA in the presence of protein L20.</text>
</comment>
<comment type="subunit">
    <text evidence="1">Part of the 50S ribosomal subunit. Contacts protein L20.</text>
</comment>
<comment type="similarity">
    <text evidence="1">Belongs to the bacterial ribosomal protein bL21 family.</text>
</comment>
<dbReference type="EMBL" id="CP000513">
    <property type="protein sequence ID" value="ABQ13950.1"/>
    <property type="molecule type" value="Genomic_DNA"/>
</dbReference>
<dbReference type="RefSeq" id="WP_012030822.1">
    <property type="nucleotide sequence ID" value="NC_009446.1"/>
</dbReference>
<dbReference type="SMR" id="A5EVQ9"/>
<dbReference type="STRING" id="246195.DNO_0486"/>
<dbReference type="KEGG" id="dno:DNO_0486"/>
<dbReference type="eggNOG" id="COG0261">
    <property type="taxonomic scope" value="Bacteria"/>
</dbReference>
<dbReference type="HOGENOM" id="CLU_061463_3_1_6"/>
<dbReference type="OrthoDB" id="9813334at2"/>
<dbReference type="Proteomes" id="UP000000248">
    <property type="component" value="Chromosome"/>
</dbReference>
<dbReference type="GO" id="GO:0005737">
    <property type="term" value="C:cytoplasm"/>
    <property type="evidence" value="ECO:0007669"/>
    <property type="project" value="UniProtKB-ARBA"/>
</dbReference>
<dbReference type="GO" id="GO:1990904">
    <property type="term" value="C:ribonucleoprotein complex"/>
    <property type="evidence" value="ECO:0007669"/>
    <property type="project" value="UniProtKB-KW"/>
</dbReference>
<dbReference type="GO" id="GO:0005840">
    <property type="term" value="C:ribosome"/>
    <property type="evidence" value="ECO:0007669"/>
    <property type="project" value="UniProtKB-KW"/>
</dbReference>
<dbReference type="GO" id="GO:0019843">
    <property type="term" value="F:rRNA binding"/>
    <property type="evidence" value="ECO:0007669"/>
    <property type="project" value="UniProtKB-UniRule"/>
</dbReference>
<dbReference type="GO" id="GO:0003735">
    <property type="term" value="F:structural constituent of ribosome"/>
    <property type="evidence" value="ECO:0007669"/>
    <property type="project" value="InterPro"/>
</dbReference>
<dbReference type="GO" id="GO:0006412">
    <property type="term" value="P:translation"/>
    <property type="evidence" value="ECO:0007669"/>
    <property type="project" value="UniProtKB-UniRule"/>
</dbReference>
<dbReference type="HAMAP" id="MF_01363">
    <property type="entry name" value="Ribosomal_bL21"/>
    <property type="match status" value="1"/>
</dbReference>
<dbReference type="InterPro" id="IPR028909">
    <property type="entry name" value="bL21-like"/>
</dbReference>
<dbReference type="InterPro" id="IPR036164">
    <property type="entry name" value="bL21-like_sf"/>
</dbReference>
<dbReference type="InterPro" id="IPR001787">
    <property type="entry name" value="Ribosomal_bL21"/>
</dbReference>
<dbReference type="InterPro" id="IPR018258">
    <property type="entry name" value="Ribosomal_bL21_CS"/>
</dbReference>
<dbReference type="NCBIfam" id="TIGR00061">
    <property type="entry name" value="L21"/>
    <property type="match status" value="1"/>
</dbReference>
<dbReference type="PANTHER" id="PTHR21349">
    <property type="entry name" value="50S RIBOSOMAL PROTEIN L21"/>
    <property type="match status" value="1"/>
</dbReference>
<dbReference type="PANTHER" id="PTHR21349:SF0">
    <property type="entry name" value="LARGE RIBOSOMAL SUBUNIT PROTEIN BL21M"/>
    <property type="match status" value="1"/>
</dbReference>
<dbReference type="Pfam" id="PF00829">
    <property type="entry name" value="Ribosomal_L21p"/>
    <property type="match status" value="1"/>
</dbReference>
<dbReference type="SUPFAM" id="SSF141091">
    <property type="entry name" value="L21p-like"/>
    <property type="match status" value="1"/>
</dbReference>
<dbReference type="PROSITE" id="PS01169">
    <property type="entry name" value="RIBOSOMAL_L21"/>
    <property type="match status" value="1"/>
</dbReference>
<keyword id="KW-1185">Reference proteome</keyword>
<keyword id="KW-0687">Ribonucleoprotein</keyword>
<keyword id="KW-0689">Ribosomal protein</keyword>
<keyword id="KW-0694">RNA-binding</keyword>
<keyword id="KW-0699">rRNA-binding</keyword>
<reference key="1">
    <citation type="journal article" date="2007" name="Nat. Biotechnol.">
        <title>Genome sequence and identification of candidate vaccine antigens from the animal pathogen Dichelobacter nodosus.</title>
        <authorList>
            <person name="Myers G.S.A."/>
            <person name="Parker D."/>
            <person name="Al-Hasani K."/>
            <person name="Kennan R.M."/>
            <person name="Seemann T."/>
            <person name="Ren Q."/>
            <person name="Badger J.H."/>
            <person name="Selengut J.D."/>
            <person name="Deboy R.T."/>
            <person name="Tettelin H."/>
            <person name="Boyce J.D."/>
            <person name="McCarl V.P."/>
            <person name="Han X."/>
            <person name="Nelson W.C."/>
            <person name="Madupu R."/>
            <person name="Mohamoud Y."/>
            <person name="Holley T."/>
            <person name="Fedorova N."/>
            <person name="Khouri H."/>
            <person name="Bottomley S.P."/>
            <person name="Whittington R.J."/>
            <person name="Adler B."/>
            <person name="Songer J.G."/>
            <person name="Rood J.I."/>
            <person name="Paulsen I.T."/>
        </authorList>
    </citation>
    <scope>NUCLEOTIDE SEQUENCE [LARGE SCALE GENOMIC DNA]</scope>
    <source>
        <strain>VCS1703A</strain>
    </source>
</reference>